<reference key="1">
    <citation type="journal article" date="2009" name="Proc. Natl. Acad. Sci. U.S.A.">
        <title>Biogeography of the Sulfolobus islandicus pan-genome.</title>
        <authorList>
            <person name="Reno M.L."/>
            <person name="Held N.L."/>
            <person name="Fields C.J."/>
            <person name="Burke P.V."/>
            <person name="Whitaker R.J."/>
        </authorList>
    </citation>
    <scope>NUCLEOTIDE SEQUENCE [LARGE SCALE GENOMIC DNA]</scope>
    <source>
        <strain>Y.N.15.51 / Yellowstone #2</strain>
    </source>
</reference>
<proteinExistence type="inferred from homology"/>
<accession>C3NHC2</accession>
<protein>
    <recommendedName>
        <fullName evidence="1">Exosome complex component Rrp42</fullName>
    </recommendedName>
</protein>
<evidence type="ECO:0000255" key="1">
    <source>
        <dbReference type="HAMAP-Rule" id="MF_00622"/>
    </source>
</evidence>
<comment type="function">
    <text evidence="1">Non-catalytic component of the exosome, which is a complex involved in RNA degradation. Contributes to the structuring of the Rrp41 active site.</text>
</comment>
<comment type="subunit">
    <text evidence="1">Component of the archaeal exosome complex. Forms a hexameric ring-like arrangement composed of 3 Rrp41-Rrp42 heterodimers. The hexameric ring associates with a trimer of Rrp4 and/or Csl4 subunits.</text>
</comment>
<comment type="subcellular location">
    <subcellularLocation>
        <location evidence="1">Cytoplasm</location>
    </subcellularLocation>
</comment>
<comment type="similarity">
    <text evidence="1">Belongs to the RNase PH family. Rrp42 subfamily.</text>
</comment>
<name>RRP42_SACI1</name>
<organism>
    <name type="scientific">Saccharolobus islandicus (strain Y.N.15.51 / Yellowstone #2)</name>
    <name type="common">Sulfolobus islandicus</name>
    <dbReference type="NCBI Taxonomy" id="419942"/>
    <lineage>
        <taxon>Archaea</taxon>
        <taxon>Thermoproteota</taxon>
        <taxon>Thermoprotei</taxon>
        <taxon>Sulfolobales</taxon>
        <taxon>Sulfolobaceae</taxon>
        <taxon>Saccharolobus</taxon>
    </lineage>
</organism>
<feature type="chain" id="PRO_1000212293" description="Exosome complex component Rrp42">
    <location>
        <begin position="1"/>
        <end position="275"/>
    </location>
</feature>
<gene>
    <name evidence="1" type="primary">rrp42</name>
    <name type="ordered locus">YN1551_1441</name>
</gene>
<keyword id="KW-0963">Cytoplasm</keyword>
<keyword id="KW-0271">Exosome</keyword>
<sequence>MSSTPSNQNIIPLIKKESIVSLFEKGTRQDGRKLTDYRPLSITLNYAKKADGSALVKLGTTMVLAGTKLEIDKPYEDTPNQGNLIVNVELLPLAYETFEPGPPDENAIELARVVDRSLRDSKALDLTKLVIEPGKSVWTVWLDVYVLDYGGNVLDACTLASVAALYNTKVYKVEQDSNGFRVNKNEVVGKLPLNHPVVTVSIAKVDKYLIVDPDLDEESIMDTKVSFSYTPDLKIVGIQKSGKGSMSLQDIDQAENTARLVAVKLLEELKKQLGI</sequence>
<dbReference type="EMBL" id="CP001404">
    <property type="protein sequence ID" value="ACP48532.1"/>
    <property type="molecule type" value="Genomic_DNA"/>
</dbReference>
<dbReference type="RefSeq" id="WP_012717444.1">
    <property type="nucleotide sequence ID" value="NC_012623.1"/>
</dbReference>
<dbReference type="SMR" id="C3NHC2"/>
<dbReference type="GeneID" id="7809833"/>
<dbReference type="KEGG" id="sin:YN1551_1441"/>
<dbReference type="HOGENOM" id="CLU_038194_0_0_2"/>
<dbReference type="Proteomes" id="UP000006818">
    <property type="component" value="Chromosome"/>
</dbReference>
<dbReference type="GO" id="GO:0000177">
    <property type="term" value="C:cytoplasmic exosome (RNase complex)"/>
    <property type="evidence" value="ECO:0007669"/>
    <property type="project" value="TreeGrafter"/>
</dbReference>
<dbReference type="GO" id="GO:0035925">
    <property type="term" value="F:mRNA 3'-UTR AU-rich region binding"/>
    <property type="evidence" value="ECO:0007669"/>
    <property type="project" value="TreeGrafter"/>
</dbReference>
<dbReference type="GO" id="GO:0016075">
    <property type="term" value="P:rRNA catabolic process"/>
    <property type="evidence" value="ECO:0007669"/>
    <property type="project" value="TreeGrafter"/>
</dbReference>
<dbReference type="CDD" id="cd11365">
    <property type="entry name" value="RNase_PH_archRRP42"/>
    <property type="match status" value="1"/>
</dbReference>
<dbReference type="FunFam" id="3.30.230.70:FF:000017">
    <property type="entry name" value="Exosome complex component Rrp42"/>
    <property type="match status" value="1"/>
</dbReference>
<dbReference type="Gene3D" id="3.30.230.70">
    <property type="entry name" value="GHMP Kinase, N-terminal domain"/>
    <property type="match status" value="1"/>
</dbReference>
<dbReference type="HAMAP" id="MF_00622">
    <property type="entry name" value="Exosome_Rrp42"/>
    <property type="match status" value="1"/>
</dbReference>
<dbReference type="InterPro" id="IPR001247">
    <property type="entry name" value="ExoRNase_PH_dom1"/>
</dbReference>
<dbReference type="InterPro" id="IPR015847">
    <property type="entry name" value="ExoRNase_PH_dom2"/>
</dbReference>
<dbReference type="InterPro" id="IPR036345">
    <property type="entry name" value="ExoRNase_PH_dom2_sf"/>
</dbReference>
<dbReference type="InterPro" id="IPR050590">
    <property type="entry name" value="Exosome_comp_Rrp42_subfam"/>
</dbReference>
<dbReference type="InterPro" id="IPR027408">
    <property type="entry name" value="PNPase/RNase_PH_dom_sf"/>
</dbReference>
<dbReference type="InterPro" id="IPR020568">
    <property type="entry name" value="Ribosomal_Su5_D2-typ_SF"/>
</dbReference>
<dbReference type="InterPro" id="IPR020869">
    <property type="entry name" value="Rrp42_archaea"/>
</dbReference>
<dbReference type="NCBIfam" id="NF003282">
    <property type="entry name" value="PRK04282.1-1"/>
    <property type="match status" value="1"/>
</dbReference>
<dbReference type="PANTHER" id="PTHR11097:SF8">
    <property type="entry name" value="EXOSOME COMPLEX COMPONENT RRP42"/>
    <property type="match status" value="1"/>
</dbReference>
<dbReference type="PANTHER" id="PTHR11097">
    <property type="entry name" value="EXOSOME COMPLEX EXONUCLEASE RIBOSOMAL RNA PROCESSING PROTEIN"/>
    <property type="match status" value="1"/>
</dbReference>
<dbReference type="Pfam" id="PF01138">
    <property type="entry name" value="RNase_PH"/>
    <property type="match status" value="1"/>
</dbReference>
<dbReference type="Pfam" id="PF03725">
    <property type="entry name" value="RNase_PH_C"/>
    <property type="match status" value="1"/>
</dbReference>
<dbReference type="SUPFAM" id="SSF55666">
    <property type="entry name" value="Ribonuclease PH domain 2-like"/>
    <property type="match status" value="1"/>
</dbReference>
<dbReference type="SUPFAM" id="SSF54211">
    <property type="entry name" value="Ribosomal protein S5 domain 2-like"/>
    <property type="match status" value="1"/>
</dbReference>